<comment type="function">
    <text evidence="1">Catalyzes the hydrolysis of the adenine ring of phosphoribosyl-AMP.</text>
</comment>
<comment type="catalytic activity">
    <reaction evidence="1">
        <text>1-(5-phospho-beta-D-ribosyl)-5'-AMP + H2O = 1-(5-phospho-beta-D-ribosyl)-5-[(5-phospho-beta-D-ribosylamino)methylideneamino]imidazole-4-carboxamide</text>
        <dbReference type="Rhea" id="RHEA:20049"/>
        <dbReference type="ChEBI" id="CHEBI:15377"/>
        <dbReference type="ChEBI" id="CHEBI:58435"/>
        <dbReference type="ChEBI" id="CHEBI:59457"/>
        <dbReference type="EC" id="3.5.4.19"/>
    </reaction>
</comment>
<comment type="cofactor">
    <cofactor evidence="1">
        <name>Mg(2+)</name>
        <dbReference type="ChEBI" id="CHEBI:18420"/>
    </cofactor>
    <text evidence="1">Binds 1 Mg(2+) ion per subunit.</text>
</comment>
<comment type="cofactor">
    <cofactor evidence="1">
        <name>Zn(2+)</name>
        <dbReference type="ChEBI" id="CHEBI:29105"/>
    </cofactor>
    <text evidence="1">Binds 1 zinc ion per subunit.</text>
</comment>
<comment type="pathway">
    <text evidence="1">Amino-acid biosynthesis; L-histidine biosynthesis; L-histidine from 5-phospho-alpha-D-ribose 1-diphosphate: step 3/9.</text>
</comment>
<comment type="subunit">
    <text evidence="1">Homodimer.</text>
</comment>
<comment type="subcellular location">
    <subcellularLocation>
        <location evidence="1">Cytoplasm</location>
    </subcellularLocation>
</comment>
<comment type="similarity">
    <text evidence="1">Belongs to the PRA-CH family.</text>
</comment>
<accession>A0B8B3</accession>
<name>HIS3_METTP</name>
<gene>
    <name evidence="1" type="primary">hisI</name>
    <name type="ordered locus">Mthe_1155</name>
</gene>
<feature type="chain" id="PRO_1000063410" description="Phosphoribosyl-AMP cyclohydrolase">
    <location>
        <begin position="1"/>
        <end position="121"/>
    </location>
</feature>
<feature type="binding site" evidence="1">
    <location>
        <position position="74"/>
    </location>
    <ligand>
        <name>Mg(2+)</name>
        <dbReference type="ChEBI" id="CHEBI:18420"/>
    </ligand>
</feature>
<feature type="binding site" evidence="1">
    <location>
        <position position="75"/>
    </location>
    <ligand>
        <name>Zn(2+)</name>
        <dbReference type="ChEBI" id="CHEBI:29105"/>
        <note>ligand shared between dimeric partners</note>
    </ligand>
</feature>
<feature type="binding site" evidence="1">
    <location>
        <position position="76"/>
    </location>
    <ligand>
        <name>Mg(2+)</name>
        <dbReference type="ChEBI" id="CHEBI:18420"/>
    </ligand>
</feature>
<feature type="binding site" evidence="1">
    <location>
        <position position="78"/>
    </location>
    <ligand>
        <name>Mg(2+)</name>
        <dbReference type="ChEBI" id="CHEBI:18420"/>
    </ligand>
</feature>
<feature type="binding site" evidence="1">
    <location>
        <position position="91"/>
    </location>
    <ligand>
        <name>Zn(2+)</name>
        <dbReference type="ChEBI" id="CHEBI:29105"/>
        <note>ligand shared between dimeric partners</note>
    </ligand>
</feature>
<feature type="binding site" evidence="1">
    <location>
        <position position="98"/>
    </location>
    <ligand>
        <name>Zn(2+)</name>
        <dbReference type="ChEBI" id="CHEBI:29105"/>
        <note>ligand shared between dimeric partners</note>
    </ligand>
</feature>
<organism>
    <name type="scientific">Methanothrix thermoacetophila (strain DSM 6194 / JCM 14653 / NBRC 101360 / PT)</name>
    <name type="common">Methanosaeta thermophila</name>
    <dbReference type="NCBI Taxonomy" id="349307"/>
    <lineage>
        <taxon>Archaea</taxon>
        <taxon>Methanobacteriati</taxon>
        <taxon>Methanobacteriota</taxon>
        <taxon>Stenosarchaea group</taxon>
        <taxon>Methanomicrobia</taxon>
        <taxon>Methanotrichales</taxon>
        <taxon>Methanotrichaceae</taxon>
        <taxon>Methanothrix</taxon>
    </lineage>
</organism>
<protein>
    <recommendedName>
        <fullName evidence="1">Phosphoribosyl-AMP cyclohydrolase</fullName>
        <shortName evidence="1">PRA-CH</shortName>
        <ecNumber evidence="1">3.5.4.19</ecNumber>
    </recommendedName>
</protein>
<sequence length="121" mass="13711">MMSMVEIPEGKLIPAIAQDWKTGEVLMLAYINSIALSKTLETGVAHYWSRSRGKLWRKGESSGNEQIVKEILVDCDEDAILLKVEQKGGACHTGYRSCFYRTLDGRIVGKRIFDPDEVYKR</sequence>
<dbReference type="EC" id="3.5.4.19" evidence="1"/>
<dbReference type="EMBL" id="CP000477">
    <property type="protein sequence ID" value="ABK14937.1"/>
    <property type="molecule type" value="Genomic_DNA"/>
</dbReference>
<dbReference type="RefSeq" id="WP_011696330.1">
    <property type="nucleotide sequence ID" value="NC_008553.1"/>
</dbReference>
<dbReference type="SMR" id="A0B8B3"/>
<dbReference type="STRING" id="349307.Mthe_1155"/>
<dbReference type="GeneID" id="4462958"/>
<dbReference type="KEGG" id="mtp:Mthe_1155"/>
<dbReference type="HOGENOM" id="CLU_048577_5_0_2"/>
<dbReference type="OrthoDB" id="5853at2157"/>
<dbReference type="UniPathway" id="UPA00031">
    <property type="reaction ID" value="UER00008"/>
</dbReference>
<dbReference type="Proteomes" id="UP000000674">
    <property type="component" value="Chromosome"/>
</dbReference>
<dbReference type="GO" id="GO:0005737">
    <property type="term" value="C:cytoplasm"/>
    <property type="evidence" value="ECO:0007669"/>
    <property type="project" value="UniProtKB-SubCell"/>
</dbReference>
<dbReference type="GO" id="GO:0000287">
    <property type="term" value="F:magnesium ion binding"/>
    <property type="evidence" value="ECO:0007669"/>
    <property type="project" value="UniProtKB-UniRule"/>
</dbReference>
<dbReference type="GO" id="GO:0004635">
    <property type="term" value="F:phosphoribosyl-AMP cyclohydrolase activity"/>
    <property type="evidence" value="ECO:0007669"/>
    <property type="project" value="UniProtKB-UniRule"/>
</dbReference>
<dbReference type="GO" id="GO:0008270">
    <property type="term" value="F:zinc ion binding"/>
    <property type="evidence" value="ECO:0007669"/>
    <property type="project" value="UniProtKB-UniRule"/>
</dbReference>
<dbReference type="GO" id="GO:0000105">
    <property type="term" value="P:L-histidine biosynthetic process"/>
    <property type="evidence" value="ECO:0007669"/>
    <property type="project" value="UniProtKB-UniRule"/>
</dbReference>
<dbReference type="FunFam" id="3.10.20.810:FF:000001">
    <property type="entry name" value="Histidine biosynthesis bifunctional protein HisIE"/>
    <property type="match status" value="1"/>
</dbReference>
<dbReference type="Gene3D" id="4.10.80.70">
    <property type="match status" value="1"/>
</dbReference>
<dbReference type="Gene3D" id="3.10.20.810">
    <property type="entry name" value="Phosphoribosyl-AMP cyclohydrolase"/>
    <property type="match status" value="1"/>
</dbReference>
<dbReference type="HAMAP" id="MF_01021">
    <property type="entry name" value="HisI"/>
    <property type="match status" value="1"/>
</dbReference>
<dbReference type="InterPro" id="IPR026660">
    <property type="entry name" value="PRA-CH"/>
</dbReference>
<dbReference type="InterPro" id="IPR002496">
    <property type="entry name" value="PRib_AMP_CycHydrolase_dom"/>
</dbReference>
<dbReference type="InterPro" id="IPR038019">
    <property type="entry name" value="PRib_AMP_CycHydrolase_sf"/>
</dbReference>
<dbReference type="NCBIfam" id="NF000768">
    <property type="entry name" value="PRK00051.1"/>
    <property type="match status" value="1"/>
</dbReference>
<dbReference type="PANTHER" id="PTHR42945">
    <property type="entry name" value="HISTIDINE BIOSYNTHESIS BIFUNCTIONAL PROTEIN"/>
    <property type="match status" value="1"/>
</dbReference>
<dbReference type="PANTHER" id="PTHR42945:SF1">
    <property type="entry name" value="HISTIDINE BIOSYNTHESIS BIFUNCTIONAL PROTEIN HIS7"/>
    <property type="match status" value="1"/>
</dbReference>
<dbReference type="Pfam" id="PF01502">
    <property type="entry name" value="PRA-CH"/>
    <property type="match status" value="1"/>
</dbReference>
<dbReference type="SUPFAM" id="SSF141734">
    <property type="entry name" value="HisI-like"/>
    <property type="match status" value="1"/>
</dbReference>
<keyword id="KW-0028">Amino-acid biosynthesis</keyword>
<keyword id="KW-0963">Cytoplasm</keyword>
<keyword id="KW-0368">Histidine biosynthesis</keyword>
<keyword id="KW-0378">Hydrolase</keyword>
<keyword id="KW-0460">Magnesium</keyword>
<keyword id="KW-0479">Metal-binding</keyword>
<keyword id="KW-1185">Reference proteome</keyword>
<keyword id="KW-0862">Zinc</keyword>
<evidence type="ECO:0000255" key="1">
    <source>
        <dbReference type="HAMAP-Rule" id="MF_01021"/>
    </source>
</evidence>
<proteinExistence type="inferred from homology"/>
<reference key="1">
    <citation type="submission" date="2006-10" db="EMBL/GenBank/DDBJ databases">
        <title>Complete sequence of Methanosaeta thermophila PT.</title>
        <authorList>
            <consortium name="US DOE Joint Genome Institute"/>
            <person name="Copeland A."/>
            <person name="Lucas S."/>
            <person name="Lapidus A."/>
            <person name="Barry K."/>
            <person name="Detter J.C."/>
            <person name="Glavina del Rio T."/>
            <person name="Hammon N."/>
            <person name="Israni S."/>
            <person name="Pitluck S."/>
            <person name="Chain P."/>
            <person name="Malfatti S."/>
            <person name="Shin M."/>
            <person name="Vergez L."/>
            <person name="Schmutz J."/>
            <person name="Larimer F."/>
            <person name="Land M."/>
            <person name="Hauser L."/>
            <person name="Kyrpides N."/>
            <person name="Kim E."/>
            <person name="Smith K.S."/>
            <person name="Ingram-Smith C."/>
            <person name="Richardson P."/>
        </authorList>
    </citation>
    <scope>NUCLEOTIDE SEQUENCE [LARGE SCALE GENOMIC DNA]</scope>
    <source>
        <strain>DSM 6194 / JCM 14653 / NBRC 101360 / PT</strain>
    </source>
</reference>